<proteinExistence type="inferred from homology"/>
<organism>
    <name type="scientific">Escherichia coli (strain SE11)</name>
    <dbReference type="NCBI Taxonomy" id="409438"/>
    <lineage>
        <taxon>Bacteria</taxon>
        <taxon>Pseudomonadati</taxon>
        <taxon>Pseudomonadota</taxon>
        <taxon>Gammaproteobacteria</taxon>
        <taxon>Enterobacterales</taxon>
        <taxon>Enterobacteriaceae</taxon>
        <taxon>Escherichia</taxon>
    </lineage>
</organism>
<reference key="1">
    <citation type="journal article" date="2008" name="DNA Res.">
        <title>Complete genome sequence and comparative analysis of the wild-type commensal Escherichia coli strain SE11 isolated from a healthy adult.</title>
        <authorList>
            <person name="Oshima K."/>
            <person name="Toh H."/>
            <person name="Ogura Y."/>
            <person name="Sasamoto H."/>
            <person name="Morita H."/>
            <person name="Park S.-H."/>
            <person name="Ooka T."/>
            <person name="Iyoda S."/>
            <person name="Taylor T.D."/>
            <person name="Hayashi T."/>
            <person name="Itoh K."/>
            <person name="Hattori M."/>
        </authorList>
    </citation>
    <scope>NUCLEOTIDE SEQUENCE [LARGE SCALE GENOMIC DNA]</scope>
    <source>
        <strain>SE11</strain>
    </source>
</reference>
<comment type="function">
    <text evidence="1">Involved in peptide bond synthesis. Alleviates ribosome stalling that occurs when 3 or more consecutive Pro residues or the sequence PPG is present in a protein, possibly by augmenting the peptidyl transferase activity of the ribosome. Modification of Lys-34 is required for alleviation.</text>
</comment>
<comment type="pathway">
    <text evidence="1">Protein biosynthesis; polypeptide chain elongation.</text>
</comment>
<comment type="subcellular location">
    <subcellularLocation>
        <location evidence="1">Cytoplasm</location>
    </subcellularLocation>
</comment>
<comment type="PTM">
    <text evidence="1">Is beta-lysylated on the epsilon-amino group of Lys-34 by the combined action of EpmA and EpmB, and then hydroxylated on the C5 position of the same residue by EpmC. Lysylation is critical for the stimulatory effect of EF-P on peptide-bond formation. The lysylation moiety would extend toward the peptidyltransferase center and stabilize the terminal 3-CCA end of the tRNA. The hydroxylation of the C5 position on Lys-34 would allow additional potential stabilizing hydrogen-bond interactions with the P-tRNA.</text>
</comment>
<comment type="similarity">
    <text evidence="1">Belongs to the elongation factor P family.</text>
</comment>
<keyword id="KW-0963">Cytoplasm</keyword>
<keyword id="KW-0251">Elongation factor</keyword>
<keyword id="KW-0379">Hydroxylation</keyword>
<keyword id="KW-0648">Protein biosynthesis</keyword>
<evidence type="ECO:0000255" key="1">
    <source>
        <dbReference type="HAMAP-Rule" id="MF_00141"/>
    </source>
</evidence>
<dbReference type="EMBL" id="AP009240">
    <property type="protein sequence ID" value="BAG79971.1"/>
    <property type="molecule type" value="Genomic_DNA"/>
</dbReference>
<dbReference type="RefSeq" id="WP_000257278.1">
    <property type="nucleotide sequence ID" value="NC_011415.1"/>
</dbReference>
<dbReference type="SMR" id="B6I254"/>
<dbReference type="GeneID" id="93777677"/>
<dbReference type="KEGG" id="ecy:ECSE_4447"/>
<dbReference type="HOGENOM" id="CLU_074944_0_0_6"/>
<dbReference type="UniPathway" id="UPA00345"/>
<dbReference type="Proteomes" id="UP000008199">
    <property type="component" value="Chromosome"/>
</dbReference>
<dbReference type="GO" id="GO:0005829">
    <property type="term" value="C:cytosol"/>
    <property type="evidence" value="ECO:0007669"/>
    <property type="project" value="UniProtKB-ARBA"/>
</dbReference>
<dbReference type="GO" id="GO:0003746">
    <property type="term" value="F:translation elongation factor activity"/>
    <property type="evidence" value="ECO:0007669"/>
    <property type="project" value="UniProtKB-UniRule"/>
</dbReference>
<dbReference type="GO" id="GO:0043043">
    <property type="term" value="P:peptide biosynthetic process"/>
    <property type="evidence" value="ECO:0007669"/>
    <property type="project" value="InterPro"/>
</dbReference>
<dbReference type="CDD" id="cd04470">
    <property type="entry name" value="S1_EF-P_repeat_1"/>
    <property type="match status" value="1"/>
</dbReference>
<dbReference type="CDD" id="cd05794">
    <property type="entry name" value="S1_EF-P_repeat_2"/>
    <property type="match status" value="1"/>
</dbReference>
<dbReference type="FunFam" id="2.30.30.30:FF:000003">
    <property type="entry name" value="Elongation factor P"/>
    <property type="match status" value="1"/>
</dbReference>
<dbReference type="FunFam" id="2.40.50.140:FF:000004">
    <property type="entry name" value="Elongation factor P"/>
    <property type="match status" value="1"/>
</dbReference>
<dbReference type="FunFam" id="2.40.50.140:FF:000009">
    <property type="entry name" value="Elongation factor P"/>
    <property type="match status" value="1"/>
</dbReference>
<dbReference type="Gene3D" id="2.30.30.30">
    <property type="match status" value="1"/>
</dbReference>
<dbReference type="Gene3D" id="2.40.50.140">
    <property type="entry name" value="Nucleic acid-binding proteins"/>
    <property type="match status" value="2"/>
</dbReference>
<dbReference type="HAMAP" id="MF_00141">
    <property type="entry name" value="EF_P"/>
    <property type="match status" value="1"/>
</dbReference>
<dbReference type="InterPro" id="IPR015365">
    <property type="entry name" value="Elong-fact-P_C"/>
</dbReference>
<dbReference type="InterPro" id="IPR012340">
    <property type="entry name" value="NA-bd_OB-fold"/>
</dbReference>
<dbReference type="InterPro" id="IPR014722">
    <property type="entry name" value="Rib_uL2_dom2"/>
</dbReference>
<dbReference type="InterPro" id="IPR020599">
    <property type="entry name" value="Transl_elong_fac_P/YeiP"/>
</dbReference>
<dbReference type="InterPro" id="IPR013185">
    <property type="entry name" value="Transl_elong_KOW-like"/>
</dbReference>
<dbReference type="InterPro" id="IPR001059">
    <property type="entry name" value="Transl_elong_P/YeiP_cen"/>
</dbReference>
<dbReference type="InterPro" id="IPR013852">
    <property type="entry name" value="Transl_elong_P/YeiP_CS"/>
</dbReference>
<dbReference type="InterPro" id="IPR011768">
    <property type="entry name" value="Transl_elongation_fac_P"/>
</dbReference>
<dbReference type="InterPro" id="IPR008991">
    <property type="entry name" value="Translation_prot_SH3-like_sf"/>
</dbReference>
<dbReference type="NCBIfam" id="TIGR00038">
    <property type="entry name" value="efp"/>
    <property type="match status" value="1"/>
</dbReference>
<dbReference type="NCBIfam" id="NF001810">
    <property type="entry name" value="PRK00529.1"/>
    <property type="match status" value="1"/>
</dbReference>
<dbReference type="PANTHER" id="PTHR30053">
    <property type="entry name" value="ELONGATION FACTOR P"/>
    <property type="match status" value="1"/>
</dbReference>
<dbReference type="PANTHER" id="PTHR30053:SF12">
    <property type="entry name" value="ELONGATION FACTOR P (EF-P) FAMILY PROTEIN"/>
    <property type="match status" value="1"/>
</dbReference>
<dbReference type="Pfam" id="PF01132">
    <property type="entry name" value="EFP"/>
    <property type="match status" value="1"/>
</dbReference>
<dbReference type="Pfam" id="PF08207">
    <property type="entry name" value="EFP_N"/>
    <property type="match status" value="1"/>
</dbReference>
<dbReference type="Pfam" id="PF09285">
    <property type="entry name" value="Elong-fact-P_C"/>
    <property type="match status" value="1"/>
</dbReference>
<dbReference type="PIRSF" id="PIRSF005901">
    <property type="entry name" value="EF-P"/>
    <property type="match status" value="1"/>
</dbReference>
<dbReference type="SMART" id="SM01185">
    <property type="entry name" value="EFP"/>
    <property type="match status" value="1"/>
</dbReference>
<dbReference type="SMART" id="SM00841">
    <property type="entry name" value="Elong-fact-P_C"/>
    <property type="match status" value="1"/>
</dbReference>
<dbReference type="SUPFAM" id="SSF50249">
    <property type="entry name" value="Nucleic acid-binding proteins"/>
    <property type="match status" value="2"/>
</dbReference>
<dbReference type="SUPFAM" id="SSF50104">
    <property type="entry name" value="Translation proteins SH3-like domain"/>
    <property type="match status" value="1"/>
</dbReference>
<dbReference type="PROSITE" id="PS01275">
    <property type="entry name" value="EFP"/>
    <property type="match status" value="1"/>
</dbReference>
<sequence length="188" mass="20591">MATYYSNDFRAGLKIMLDGEPYAVEASEFVKPGKGQAFARVKLRRLLTGTRVEKTFKSTDSAEGADVVDMNLTYLYNDGEFWHFMNNETFEQLSADAKAIGDNAKWLLDQAECIVTLWNGQPISVTPPNFVELEIVDTDPGLKGDTAGTGGKPATLSTGAVVKVPLFVQIGEVIKVDTRSGEYVSRVK</sequence>
<protein>
    <recommendedName>
        <fullName evidence="1">Elongation factor P</fullName>
        <shortName evidence="1">EF-P</shortName>
    </recommendedName>
</protein>
<name>EFP_ECOSE</name>
<feature type="chain" id="PRO_1000096152" description="Elongation factor P">
    <location>
        <begin position="1"/>
        <end position="188"/>
    </location>
</feature>
<feature type="modified residue" description="N6-(3,6-diaminohexanoyl)-5-hydroxylysine" evidence="1">
    <location>
        <position position="34"/>
    </location>
</feature>
<accession>B6I254</accession>
<gene>
    <name evidence="1" type="primary">efp</name>
    <name type="ordered locus">ECSE_4447</name>
</gene>